<feature type="chain" id="PRO_1000097713" description="tRNA pseudouridine synthase A">
    <location>
        <begin position="1"/>
        <end position="262"/>
    </location>
</feature>
<feature type="active site" description="Nucleophile" evidence="1">
    <location>
        <position position="51"/>
    </location>
</feature>
<feature type="binding site" evidence="1">
    <location>
        <position position="109"/>
    </location>
    <ligand>
        <name>substrate</name>
    </ligand>
</feature>
<gene>
    <name evidence="1" type="primary">truA</name>
    <name type="ordered locus">APP7_0961</name>
</gene>
<protein>
    <recommendedName>
        <fullName evidence="1">tRNA pseudouridine synthase A</fullName>
        <ecNumber evidence="1">5.4.99.12</ecNumber>
    </recommendedName>
    <alternativeName>
        <fullName evidence="1">tRNA pseudouridine(38-40) synthase</fullName>
    </alternativeName>
    <alternativeName>
        <fullName evidence="1">tRNA pseudouridylate synthase I</fullName>
    </alternativeName>
    <alternativeName>
        <fullName evidence="1">tRNA-uridine isomerase I</fullName>
    </alternativeName>
</protein>
<accession>B3GXP8</accession>
<proteinExistence type="inferred from homology"/>
<comment type="function">
    <text evidence="1">Formation of pseudouridine at positions 38, 39 and 40 in the anticodon stem and loop of transfer RNAs.</text>
</comment>
<comment type="catalytic activity">
    <reaction evidence="1">
        <text>uridine(38/39/40) in tRNA = pseudouridine(38/39/40) in tRNA</text>
        <dbReference type="Rhea" id="RHEA:22376"/>
        <dbReference type="Rhea" id="RHEA-COMP:10085"/>
        <dbReference type="Rhea" id="RHEA-COMP:10087"/>
        <dbReference type="ChEBI" id="CHEBI:65314"/>
        <dbReference type="ChEBI" id="CHEBI:65315"/>
        <dbReference type="EC" id="5.4.99.12"/>
    </reaction>
</comment>
<comment type="subunit">
    <text evidence="1">Homodimer.</text>
</comment>
<comment type="similarity">
    <text evidence="1">Belongs to the tRNA pseudouridine synthase TruA family.</text>
</comment>
<name>TRUA_ACTP7</name>
<keyword id="KW-0413">Isomerase</keyword>
<keyword id="KW-0819">tRNA processing</keyword>
<sequence length="262" mass="29708">MKIALGIEYDGSRYFGWQRQDEVESVQQKLEEALSIVANAPIEVFCAGRTDSGVHGTGQVVHFETQAIRPLQSWCFGTNANLPDDIAVKWAVEVSEDFHARFSATARRYRYIIFNNKLRSAILPKGVSHYHYELDHQKMHEAGQFLLGENDFSSFRAAKCQSHTPWRNVHHLNVSRLGNYIVVDIQANAFVHHMVRNIVGSLIEVGQGRQPVEWIQWLLAQRDRTLAAPTAKAEGLYLVDVHYPERFGIPKTALGPLFLANN</sequence>
<organism>
    <name type="scientific">Actinobacillus pleuropneumoniae serotype 7 (strain AP76)</name>
    <dbReference type="NCBI Taxonomy" id="537457"/>
    <lineage>
        <taxon>Bacteria</taxon>
        <taxon>Pseudomonadati</taxon>
        <taxon>Pseudomonadota</taxon>
        <taxon>Gammaproteobacteria</taxon>
        <taxon>Pasteurellales</taxon>
        <taxon>Pasteurellaceae</taxon>
        <taxon>Actinobacillus</taxon>
    </lineage>
</organism>
<reference key="1">
    <citation type="submission" date="2008-06" db="EMBL/GenBank/DDBJ databases">
        <title>Genome and proteome analysis of A. pleuropneumoniae serotype 7.</title>
        <authorList>
            <person name="Linke B."/>
            <person name="Buettner F."/>
            <person name="Martinez-Arias R."/>
            <person name="Goesmann A."/>
            <person name="Baltes N."/>
            <person name="Tegetmeyer H."/>
            <person name="Singh M."/>
            <person name="Gerlach G.F."/>
        </authorList>
    </citation>
    <scope>NUCLEOTIDE SEQUENCE [LARGE SCALE GENOMIC DNA]</scope>
    <source>
        <strain>AP76</strain>
    </source>
</reference>
<evidence type="ECO:0000255" key="1">
    <source>
        <dbReference type="HAMAP-Rule" id="MF_00171"/>
    </source>
</evidence>
<dbReference type="EC" id="5.4.99.12" evidence="1"/>
<dbReference type="EMBL" id="CP001091">
    <property type="protein sequence ID" value="ACE61613.1"/>
    <property type="molecule type" value="Genomic_DNA"/>
</dbReference>
<dbReference type="RefSeq" id="WP_005617397.1">
    <property type="nucleotide sequence ID" value="NC_010939.1"/>
</dbReference>
<dbReference type="SMR" id="B3GXP8"/>
<dbReference type="KEGG" id="apa:APP7_0961"/>
<dbReference type="HOGENOM" id="CLU_014673_0_2_6"/>
<dbReference type="Proteomes" id="UP000001226">
    <property type="component" value="Chromosome"/>
</dbReference>
<dbReference type="GO" id="GO:0003723">
    <property type="term" value="F:RNA binding"/>
    <property type="evidence" value="ECO:0007669"/>
    <property type="project" value="InterPro"/>
</dbReference>
<dbReference type="GO" id="GO:0160147">
    <property type="term" value="F:tRNA pseudouridine(38-40) synthase activity"/>
    <property type="evidence" value="ECO:0007669"/>
    <property type="project" value="UniProtKB-EC"/>
</dbReference>
<dbReference type="GO" id="GO:0031119">
    <property type="term" value="P:tRNA pseudouridine synthesis"/>
    <property type="evidence" value="ECO:0007669"/>
    <property type="project" value="UniProtKB-UniRule"/>
</dbReference>
<dbReference type="CDD" id="cd02570">
    <property type="entry name" value="PseudoU_synth_EcTruA"/>
    <property type="match status" value="1"/>
</dbReference>
<dbReference type="FunFam" id="3.30.70.580:FF:000001">
    <property type="entry name" value="tRNA pseudouridine synthase A"/>
    <property type="match status" value="1"/>
</dbReference>
<dbReference type="FunFam" id="3.30.70.660:FF:000001">
    <property type="entry name" value="tRNA pseudouridine synthase A"/>
    <property type="match status" value="1"/>
</dbReference>
<dbReference type="Gene3D" id="3.30.70.660">
    <property type="entry name" value="Pseudouridine synthase I, catalytic domain, C-terminal subdomain"/>
    <property type="match status" value="1"/>
</dbReference>
<dbReference type="Gene3D" id="3.30.70.580">
    <property type="entry name" value="Pseudouridine synthase I, catalytic domain, N-terminal subdomain"/>
    <property type="match status" value="1"/>
</dbReference>
<dbReference type="HAMAP" id="MF_00171">
    <property type="entry name" value="TruA"/>
    <property type="match status" value="1"/>
</dbReference>
<dbReference type="InterPro" id="IPR020103">
    <property type="entry name" value="PsdUridine_synth_cat_dom_sf"/>
</dbReference>
<dbReference type="InterPro" id="IPR001406">
    <property type="entry name" value="PsdUridine_synth_TruA"/>
</dbReference>
<dbReference type="InterPro" id="IPR020097">
    <property type="entry name" value="PsdUridine_synth_TruA_a/b_dom"/>
</dbReference>
<dbReference type="InterPro" id="IPR020095">
    <property type="entry name" value="PsdUridine_synth_TruA_C"/>
</dbReference>
<dbReference type="InterPro" id="IPR020094">
    <property type="entry name" value="TruA/RsuA/RluB/E/F_N"/>
</dbReference>
<dbReference type="NCBIfam" id="TIGR00071">
    <property type="entry name" value="hisT_truA"/>
    <property type="match status" value="1"/>
</dbReference>
<dbReference type="PANTHER" id="PTHR11142">
    <property type="entry name" value="PSEUDOURIDYLATE SYNTHASE"/>
    <property type="match status" value="1"/>
</dbReference>
<dbReference type="PANTHER" id="PTHR11142:SF0">
    <property type="entry name" value="TRNA PSEUDOURIDINE SYNTHASE-LIKE 1"/>
    <property type="match status" value="1"/>
</dbReference>
<dbReference type="Pfam" id="PF01416">
    <property type="entry name" value="PseudoU_synth_1"/>
    <property type="match status" value="2"/>
</dbReference>
<dbReference type="PIRSF" id="PIRSF001430">
    <property type="entry name" value="tRNA_psdUrid_synth"/>
    <property type="match status" value="1"/>
</dbReference>
<dbReference type="SUPFAM" id="SSF55120">
    <property type="entry name" value="Pseudouridine synthase"/>
    <property type="match status" value="1"/>
</dbReference>